<gene>
    <name evidence="1" type="primary">rsmJ</name>
    <name type="synonym">yhiQ</name>
    <name type="ordered locus">SbBS512_E3825</name>
</gene>
<feature type="chain" id="PRO_1000198514" description="Ribosomal RNA small subunit methyltransferase J">
    <location>
        <begin position="1"/>
        <end position="250"/>
    </location>
</feature>
<feature type="binding site" evidence="1">
    <location>
        <begin position="101"/>
        <end position="102"/>
    </location>
    <ligand>
        <name>S-adenosyl-L-methionine</name>
        <dbReference type="ChEBI" id="CHEBI:59789"/>
    </ligand>
</feature>
<feature type="binding site" evidence="1">
    <location>
        <begin position="117"/>
        <end position="118"/>
    </location>
    <ligand>
        <name>S-adenosyl-L-methionine</name>
        <dbReference type="ChEBI" id="CHEBI:59789"/>
    </ligand>
</feature>
<feature type="binding site" evidence="1">
    <location>
        <begin position="153"/>
        <end position="154"/>
    </location>
    <ligand>
        <name>S-adenosyl-L-methionine</name>
        <dbReference type="ChEBI" id="CHEBI:59789"/>
    </ligand>
</feature>
<feature type="binding site" evidence="1">
    <location>
        <position position="171"/>
    </location>
    <ligand>
        <name>S-adenosyl-L-methionine</name>
        <dbReference type="ChEBI" id="CHEBI:59789"/>
    </ligand>
</feature>
<comment type="function">
    <text evidence="1">Specifically methylates the guanosine in position 1516 of 16S rRNA.</text>
</comment>
<comment type="catalytic activity">
    <reaction evidence="1">
        <text>guanosine(1516) in 16S rRNA + S-adenosyl-L-methionine = N(2)-methylguanosine(1516) in 16S rRNA + S-adenosyl-L-homocysteine + H(+)</text>
        <dbReference type="Rhea" id="RHEA:43220"/>
        <dbReference type="Rhea" id="RHEA-COMP:10412"/>
        <dbReference type="Rhea" id="RHEA-COMP:10413"/>
        <dbReference type="ChEBI" id="CHEBI:15378"/>
        <dbReference type="ChEBI" id="CHEBI:57856"/>
        <dbReference type="ChEBI" id="CHEBI:59789"/>
        <dbReference type="ChEBI" id="CHEBI:74269"/>
        <dbReference type="ChEBI" id="CHEBI:74481"/>
        <dbReference type="EC" id="2.1.1.242"/>
    </reaction>
</comment>
<comment type="subcellular location">
    <subcellularLocation>
        <location evidence="1">Cytoplasm</location>
    </subcellularLocation>
</comment>
<comment type="similarity">
    <text evidence="1">Belongs to the methyltransferase superfamily. RsmJ family.</text>
</comment>
<name>RSMJ_SHIB3</name>
<evidence type="ECO:0000255" key="1">
    <source>
        <dbReference type="HAMAP-Rule" id="MF_01523"/>
    </source>
</evidence>
<dbReference type="EC" id="2.1.1.242" evidence="1"/>
<dbReference type="EMBL" id="CP001063">
    <property type="protein sequence ID" value="ACD06994.1"/>
    <property type="molecule type" value="Genomic_DNA"/>
</dbReference>
<dbReference type="RefSeq" id="WP_000686609.1">
    <property type="nucleotide sequence ID" value="NC_010658.1"/>
</dbReference>
<dbReference type="SMR" id="B2U3P9"/>
<dbReference type="STRING" id="344609.SbBS512_E3825"/>
<dbReference type="KEGG" id="sbc:SbBS512_E3825"/>
<dbReference type="HOGENOM" id="CLU_076324_0_0_6"/>
<dbReference type="Proteomes" id="UP000001030">
    <property type="component" value="Chromosome"/>
</dbReference>
<dbReference type="GO" id="GO:0005737">
    <property type="term" value="C:cytoplasm"/>
    <property type="evidence" value="ECO:0007669"/>
    <property type="project" value="UniProtKB-SubCell"/>
</dbReference>
<dbReference type="GO" id="GO:0008990">
    <property type="term" value="F:rRNA (guanine-N2-)-methyltransferase activity"/>
    <property type="evidence" value="ECO:0007669"/>
    <property type="project" value="UniProtKB-UniRule"/>
</dbReference>
<dbReference type="CDD" id="cd02440">
    <property type="entry name" value="AdoMet_MTases"/>
    <property type="match status" value="1"/>
</dbReference>
<dbReference type="FunFam" id="3.40.1630.10:FF:000001">
    <property type="entry name" value="Ribosomal RNA small subunit methyltransferase J"/>
    <property type="match status" value="1"/>
</dbReference>
<dbReference type="FunFam" id="3.40.50.150:FF:000072">
    <property type="entry name" value="Ribosomal RNA small subunit methyltransferase J"/>
    <property type="match status" value="1"/>
</dbReference>
<dbReference type="Gene3D" id="3.40.50.150">
    <property type="entry name" value="Vaccinia Virus protein VP39"/>
    <property type="match status" value="1"/>
</dbReference>
<dbReference type="Gene3D" id="3.40.1630.10">
    <property type="entry name" value="YhiQ-like domain"/>
    <property type="match status" value="1"/>
</dbReference>
<dbReference type="HAMAP" id="MF_01523">
    <property type="entry name" value="16SrRNA_methyltr_J"/>
    <property type="match status" value="1"/>
</dbReference>
<dbReference type="InterPro" id="IPR007536">
    <property type="entry name" value="16SrRNA_methylTrfase_J"/>
</dbReference>
<dbReference type="InterPro" id="IPR029063">
    <property type="entry name" value="SAM-dependent_MTases_sf"/>
</dbReference>
<dbReference type="NCBIfam" id="NF008012">
    <property type="entry name" value="PRK10742.1"/>
    <property type="match status" value="1"/>
</dbReference>
<dbReference type="PANTHER" id="PTHR36112">
    <property type="entry name" value="RIBOSOMAL RNA SMALL SUBUNIT METHYLTRANSFERASE J"/>
    <property type="match status" value="1"/>
</dbReference>
<dbReference type="PANTHER" id="PTHR36112:SF1">
    <property type="entry name" value="RIBOSOMAL RNA SMALL SUBUNIT METHYLTRANSFERASE J"/>
    <property type="match status" value="1"/>
</dbReference>
<dbReference type="Pfam" id="PF04445">
    <property type="entry name" value="SAM_MT"/>
    <property type="match status" value="1"/>
</dbReference>
<dbReference type="SUPFAM" id="SSF53335">
    <property type="entry name" value="S-adenosyl-L-methionine-dependent methyltransferases"/>
    <property type="match status" value="1"/>
</dbReference>
<proteinExistence type="inferred from homology"/>
<keyword id="KW-0963">Cytoplasm</keyword>
<keyword id="KW-0489">Methyltransferase</keyword>
<keyword id="KW-1185">Reference proteome</keyword>
<keyword id="KW-0698">rRNA processing</keyword>
<keyword id="KW-0949">S-adenosyl-L-methionine</keyword>
<keyword id="KW-0808">Transferase</keyword>
<accession>B2U3P9</accession>
<organism>
    <name type="scientific">Shigella boydii serotype 18 (strain CDC 3083-94 / BS512)</name>
    <dbReference type="NCBI Taxonomy" id="344609"/>
    <lineage>
        <taxon>Bacteria</taxon>
        <taxon>Pseudomonadati</taxon>
        <taxon>Pseudomonadota</taxon>
        <taxon>Gammaproteobacteria</taxon>
        <taxon>Enterobacterales</taxon>
        <taxon>Enterobacteriaceae</taxon>
        <taxon>Shigella</taxon>
    </lineage>
</organism>
<protein>
    <recommendedName>
        <fullName evidence="1">Ribosomal RNA small subunit methyltransferase J</fullName>
        <ecNumber evidence="1">2.1.1.242</ecNumber>
    </recommendedName>
    <alternativeName>
        <fullName evidence="1">16S rRNA m2G1516 methyltransferase</fullName>
    </alternativeName>
    <alternativeName>
        <fullName evidence="1">rRNA (guanine-N(2)-)-methyltransferase</fullName>
    </alternativeName>
</protein>
<sequence>MKICLIDETGAGDGALSVLAARWGLEHDEDNLMALVLTPEHLELRKRDEPKLGGIFVDFVGGAMAHRRKFGGGRGEAVAKAVGIKGDYLPDVVDATAGLGRDAFVLASVGCRVRMLERNPVVAALLDDGLARGYADAEIGGWLQERLQLIHASSLTALTDITPRPQVVYLDPMFPHKQKSALVKKEMRVFQSLVGPDLDADGLLEPARLLATKRVVVKRPDYAPPLANVTTPNAVVTKGHRFDIYAGTPV</sequence>
<reference key="1">
    <citation type="submission" date="2008-05" db="EMBL/GenBank/DDBJ databases">
        <title>Complete sequence of Shigella boydii serotype 18 strain BS512.</title>
        <authorList>
            <person name="Rasko D.A."/>
            <person name="Rosovitz M."/>
            <person name="Maurelli A.T."/>
            <person name="Myers G."/>
            <person name="Seshadri R."/>
            <person name="Cer R."/>
            <person name="Jiang L."/>
            <person name="Ravel J."/>
            <person name="Sebastian Y."/>
        </authorList>
    </citation>
    <scope>NUCLEOTIDE SEQUENCE [LARGE SCALE GENOMIC DNA]</scope>
    <source>
        <strain>CDC 3083-94 / BS512</strain>
    </source>
</reference>